<accession>Q0UI03</accession>
<dbReference type="EMBL" id="CH445337">
    <property type="protein sequence ID" value="EAT83779.2"/>
    <property type="molecule type" value="Genomic_DNA"/>
</dbReference>
<dbReference type="RefSeq" id="XP_001798920.1">
    <property type="nucleotide sequence ID" value="XM_001798868.1"/>
</dbReference>
<dbReference type="SMR" id="Q0UI03"/>
<dbReference type="FunCoup" id="Q0UI03">
    <property type="interactions" value="56"/>
</dbReference>
<dbReference type="STRING" id="321614.Q0UI03"/>
<dbReference type="GlyCosmos" id="Q0UI03">
    <property type="glycosylation" value="1 site, No reported glycans"/>
</dbReference>
<dbReference type="EnsemblFungi" id="SNOT_08611">
    <property type="protein sequence ID" value="SNOT_08611"/>
    <property type="gene ID" value="SNOG_08611"/>
</dbReference>
<dbReference type="GeneID" id="5975819"/>
<dbReference type="KEGG" id="pno:SNOG_08611"/>
<dbReference type="VEuPathDB" id="FungiDB:JI435_086110"/>
<dbReference type="eggNOG" id="KOG0254">
    <property type="taxonomic scope" value="Eukaryota"/>
</dbReference>
<dbReference type="HOGENOM" id="CLU_000960_22_1_1"/>
<dbReference type="InParanoid" id="Q0UI03"/>
<dbReference type="Proteomes" id="UP000001055">
    <property type="component" value="Unassembled WGS sequence"/>
</dbReference>
<dbReference type="GO" id="GO:0005886">
    <property type="term" value="C:plasma membrane"/>
    <property type="evidence" value="ECO:0000318"/>
    <property type="project" value="GO_Central"/>
</dbReference>
<dbReference type="GO" id="GO:0022857">
    <property type="term" value="F:transmembrane transporter activity"/>
    <property type="evidence" value="ECO:0000318"/>
    <property type="project" value="GO_Central"/>
</dbReference>
<dbReference type="GO" id="GO:0055085">
    <property type="term" value="P:transmembrane transport"/>
    <property type="evidence" value="ECO:0000318"/>
    <property type="project" value="GO_Central"/>
</dbReference>
<dbReference type="CDD" id="cd17502">
    <property type="entry name" value="MFS_Azr1_MDR_like"/>
    <property type="match status" value="1"/>
</dbReference>
<dbReference type="FunFam" id="1.20.1250.20:FF:000196">
    <property type="entry name" value="MFS toxin efflux pump (AflT)"/>
    <property type="match status" value="1"/>
</dbReference>
<dbReference type="Gene3D" id="1.20.1250.20">
    <property type="entry name" value="MFS general substrate transporter like domains"/>
    <property type="match status" value="1"/>
</dbReference>
<dbReference type="Gene3D" id="1.20.1720.10">
    <property type="entry name" value="Multidrug resistance protein D"/>
    <property type="match status" value="1"/>
</dbReference>
<dbReference type="InterPro" id="IPR011701">
    <property type="entry name" value="MFS"/>
</dbReference>
<dbReference type="InterPro" id="IPR020846">
    <property type="entry name" value="MFS_dom"/>
</dbReference>
<dbReference type="InterPro" id="IPR036259">
    <property type="entry name" value="MFS_trans_sf"/>
</dbReference>
<dbReference type="InterPro" id="IPR005829">
    <property type="entry name" value="Sugar_transporter_CS"/>
</dbReference>
<dbReference type="PANTHER" id="PTHR23501">
    <property type="entry name" value="MAJOR FACILITATOR SUPERFAMILY"/>
    <property type="match status" value="1"/>
</dbReference>
<dbReference type="PANTHER" id="PTHR23501:SF199">
    <property type="entry name" value="MFS EFFLUX TRANSPORTER INPD-RELATED"/>
    <property type="match status" value="1"/>
</dbReference>
<dbReference type="Pfam" id="PF07690">
    <property type="entry name" value="MFS_1"/>
    <property type="match status" value="1"/>
</dbReference>
<dbReference type="SUPFAM" id="SSF103473">
    <property type="entry name" value="MFS general substrate transporter"/>
    <property type="match status" value="1"/>
</dbReference>
<dbReference type="PROSITE" id="PS50850">
    <property type="entry name" value="MFS"/>
    <property type="match status" value="1"/>
</dbReference>
<dbReference type="PROSITE" id="PS00217">
    <property type="entry name" value="SUGAR_TRANSPORT_2"/>
    <property type="match status" value="1"/>
</dbReference>
<comment type="function">
    <text evidence="4">MFS-type efflux pump; part of the gene cluster that mediates the biosynthesis of elsinochrome C, a perelyenequinone phytotoxin structurally similar to cercosporin.</text>
</comment>
<comment type="subcellular location">
    <subcellularLocation>
        <location evidence="6">Cell membrane</location>
        <topology evidence="1">Multi-pass membrane protein</topology>
    </subcellularLocation>
</comment>
<comment type="induction">
    <text evidence="4">Expression is up-regulated during the late stage of P.nodorum wheat leaf infection and is controlled by the cluster specific transporter elcR.</text>
</comment>
<comment type="similarity">
    <text evidence="6">Belongs to the major facilitator superfamily. TCR/Tet family.</text>
</comment>
<proteinExistence type="evidence at transcript level"/>
<reference key="1">
    <citation type="journal article" date="2007" name="Plant Cell">
        <title>Dothideomycete-plant interactions illuminated by genome sequencing and EST analysis of the wheat pathogen Stagonospora nodorum.</title>
        <authorList>
            <person name="Hane J.K."/>
            <person name="Lowe R.G.T."/>
            <person name="Solomon P.S."/>
            <person name="Tan K.-C."/>
            <person name="Schoch C.L."/>
            <person name="Spatafora J.W."/>
            <person name="Crous P.W."/>
            <person name="Kodira C.D."/>
            <person name="Birren B.W."/>
            <person name="Galagan J.E."/>
            <person name="Torriani S.F.F."/>
            <person name="McDonald B.A."/>
            <person name="Oliver R.P."/>
        </authorList>
    </citation>
    <scope>NUCLEOTIDE SEQUENCE [LARGE SCALE GENOMIC DNA]</scope>
    <source>
        <strain>SN15 / ATCC MYA-4574 / FGSC 10173</strain>
    </source>
</reference>
<reference key="2">
    <citation type="journal article" date="2017" name="Environ. Microbiol.">
        <title>Functional genomics-guided discovery of a light-activated phytotoxin in the wheat pathogen Parastagonospora nodorum via pathway activation.</title>
        <authorList>
            <person name="Chooi Y.H."/>
            <person name="Zhang G."/>
            <person name="Hu J."/>
            <person name="Muria-Gonzalez M.J."/>
            <person name="Tran P.N."/>
            <person name="Pettitt A."/>
            <person name="Maier A.G."/>
            <person name="Barrow R.A."/>
            <person name="Solomon P.S."/>
        </authorList>
    </citation>
    <scope>INDUCTION</scope>
    <scope>FUNCTION</scope>
</reference>
<gene>
    <name evidence="5" type="primary">elcC</name>
    <name type="ORF">SNOG_08611</name>
</gene>
<name>ELCC_PHANO</name>
<sequence length="562" mass="60304">MTGAKTNQVDQRPLSITDLLHFIPYDLQQTFLFEAILSYGKIYNLYPIKWVFLIALALFEIGSLICGAAPSSVGLIMGRVVAGIGSGGLFAGAILLVAEFKPLNERAFYNGMLGAMYSVASVAGPLMGGAFTERVTWRLCFYINLPLGVVTAVIVFLLVPNNYDSGRDSRRGLPLKKKLQEMDLYGLVVLVPTIICILLATQWGGTKYSWGNARIIALFVVGFVLFVAFVVIEIWQGDRAIVPPSLVKRRTVWACSIFSFCLFGSFLVVAYFLPLWFQAIKGDTATESGIHNLPSILGTTIFSVAAGGMVFGLGYYTWACILGSVLAAVGAGLLSTLEVDSNAAKWIGYQVLYGAGCGFGLNQPLIAIQAALPDFQKSEGTAVVIFMQTFGGTIAIAVAQNVFNNKLVSNILAAGIPVDPAALLSVGATKLQGLVQPQFFGRLQLAYNDSITQTFYVAVATAGLSMAGSILIPWLSVKQAVAPEDAETANTVMPFQHPSSDVDLAMPAILRQSGEIASEDSQSSDIEKVPRNNEVSTYDSQTSEVEKSSVGSTNRKVESIRN</sequence>
<protein>
    <recommendedName>
        <fullName evidence="5">MFS-type efflux pump elcC</fullName>
    </recommendedName>
    <alternativeName>
        <fullName evidence="5">Elsinochrome C biosynthesis cluster protein C</fullName>
    </alternativeName>
</protein>
<organism>
    <name type="scientific">Phaeosphaeria nodorum (strain SN15 / ATCC MYA-4574 / FGSC 10173)</name>
    <name type="common">Glume blotch fungus</name>
    <name type="synonym">Parastagonospora nodorum</name>
    <dbReference type="NCBI Taxonomy" id="321614"/>
    <lineage>
        <taxon>Eukaryota</taxon>
        <taxon>Fungi</taxon>
        <taxon>Dikarya</taxon>
        <taxon>Ascomycota</taxon>
        <taxon>Pezizomycotina</taxon>
        <taxon>Dothideomycetes</taxon>
        <taxon>Pleosporomycetidae</taxon>
        <taxon>Pleosporales</taxon>
        <taxon>Pleosporineae</taxon>
        <taxon>Phaeosphaeriaceae</taxon>
        <taxon>Parastagonospora</taxon>
    </lineage>
</organism>
<keyword id="KW-1003">Cell membrane</keyword>
<keyword id="KW-0325">Glycoprotein</keyword>
<keyword id="KW-0472">Membrane</keyword>
<keyword id="KW-0812">Transmembrane</keyword>
<keyword id="KW-1133">Transmembrane helix</keyword>
<keyword id="KW-0813">Transport</keyword>
<feature type="chain" id="PRO_0000449868" description="MFS-type efflux pump elcC">
    <location>
        <begin position="1"/>
        <end position="562"/>
    </location>
</feature>
<feature type="transmembrane region" description="Helical" evidence="1">
    <location>
        <begin position="50"/>
        <end position="70"/>
    </location>
</feature>
<feature type="transmembrane region" description="Helical" evidence="1">
    <location>
        <begin position="80"/>
        <end position="100"/>
    </location>
</feature>
<feature type="transmembrane region" description="Helical" evidence="1">
    <location>
        <begin position="111"/>
        <end position="131"/>
    </location>
</feature>
<feature type="transmembrane region" description="Helical" evidence="1">
    <location>
        <begin position="139"/>
        <end position="159"/>
    </location>
</feature>
<feature type="transmembrane region" description="Helical" evidence="1">
    <location>
        <begin position="184"/>
        <end position="204"/>
    </location>
</feature>
<feature type="transmembrane region" description="Helical" evidence="1">
    <location>
        <begin position="215"/>
        <end position="235"/>
    </location>
</feature>
<feature type="transmembrane region" description="Helical" evidence="1">
    <location>
        <begin position="257"/>
        <end position="277"/>
    </location>
</feature>
<feature type="transmembrane region" description="Helical" evidence="1">
    <location>
        <begin position="288"/>
        <end position="308"/>
    </location>
</feature>
<feature type="transmembrane region" description="Helical" evidence="1">
    <location>
        <begin position="309"/>
        <end position="329"/>
    </location>
</feature>
<feature type="transmembrane region" description="Helical" evidence="1">
    <location>
        <begin position="351"/>
        <end position="371"/>
    </location>
</feature>
<feature type="transmembrane region" description="Helical" evidence="1">
    <location>
        <begin position="383"/>
        <end position="403"/>
    </location>
</feature>
<feature type="transmembrane region" description="Helical" evidence="1">
    <location>
        <begin position="455"/>
        <end position="475"/>
    </location>
</feature>
<feature type="region of interest" description="Disordered" evidence="3">
    <location>
        <begin position="515"/>
        <end position="562"/>
    </location>
</feature>
<feature type="compositionally biased region" description="Polar residues" evidence="3">
    <location>
        <begin position="533"/>
        <end position="554"/>
    </location>
</feature>
<feature type="glycosylation site" description="N-linked (GlcNAc...) asparagine" evidence="2">
    <location>
        <position position="448"/>
    </location>
</feature>
<evidence type="ECO:0000255" key="1"/>
<evidence type="ECO:0000255" key="2">
    <source>
        <dbReference type="PROSITE-ProRule" id="PRU00498"/>
    </source>
</evidence>
<evidence type="ECO:0000256" key="3">
    <source>
        <dbReference type="SAM" id="MobiDB-lite"/>
    </source>
</evidence>
<evidence type="ECO:0000269" key="4">
    <source>
    </source>
</evidence>
<evidence type="ECO:0000303" key="5">
    <source>
    </source>
</evidence>
<evidence type="ECO:0000305" key="6"/>